<organism>
    <name type="scientific">Aromatoleum aromaticum (strain DSM 19018 / LMG 30748 / EbN1)</name>
    <name type="common">Azoarcus sp. (strain EbN1)</name>
    <dbReference type="NCBI Taxonomy" id="76114"/>
    <lineage>
        <taxon>Bacteria</taxon>
        <taxon>Pseudomonadati</taxon>
        <taxon>Pseudomonadota</taxon>
        <taxon>Betaproteobacteria</taxon>
        <taxon>Rhodocyclales</taxon>
        <taxon>Rhodocyclaceae</taxon>
        <taxon>Aromatoleum</taxon>
    </lineage>
</organism>
<reference key="1">
    <citation type="journal article" date="2005" name="Arch. Microbiol.">
        <title>The genome sequence of an anaerobic aromatic-degrading denitrifying bacterium, strain EbN1.</title>
        <authorList>
            <person name="Rabus R."/>
            <person name="Kube M."/>
            <person name="Heider J."/>
            <person name="Beck A."/>
            <person name="Heitmann K."/>
            <person name="Widdel F."/>
            <person name="Reinhardt R."/>
        </authorList>
    </citation>
    <scope>NUCLEOTIDE SEQUENCE [LARGE SCALE GENOMIC DNA]</scope>
    <source>
        <strain>DSM 19018 / LMG 30748 / EbN1</strain>
    </source>
</reference>
<proteinExistence type="inferred from homology"/>
<sequence>MPATPPNRLGLTASGLLALCRAGFEKEVAAELDDFAAGIGLTGFVRTRPGSAFVTFETHEPVAFADLAERCDWRTLIFARQLLPWFARVDDLPERDRATPIATATRNAGQRFAQLMLETPDTDEAKQQSGFCRRFTVPLQHELERIGAFREGAKGLPELHILFPDTSTAWLCAALPGQAALWPMGIPRLRMLREAASRSTLKLAEAIFTLLSETERNASLRAGLRAVDLGAAPGGWTWQLAHRGLRVTAVDNGPMAPSVMATEMVEHVRADGFTWRPQRPVEWMVCDMVEQPTRIAALVADWIATGRCRRTIFNLKLPMKKRLEAVEQCRALITKRLAQAGPFELRFKHLYHDREEITGYLALRAAAV</sequence>
<accession>Q5P1Y4</accession>
<protein>
    <recommendedName>
        <fullName evidence="1">Ribosomal RNA large subunit methyltransferase M</fullName>
        <ecNumber evidence="1">2.1.1.186</ecNumber>
    </recommendedName>
    <alternativeName>
        <fullName evidence="1">23S rRNA (cytidine2498-2'-O)-methyltransferase</fullName>
    </alternativeName>
    <alternativeName>
        <fullName evidence="1">23S rRNA 2'-O-ribose methyltransferase RlmM</fullName>
    </alternativeName>
</protein>
<feature type="chain" id="PRO_0000070399" description="Ribosomal RNA large subunit methyltransferase M">
    <location>
        <begin position="1"/>
        <end position="368"/>
    </location>
</feature>
<feature type="active site" description="Proton acceptor" evidence="1">
    <location>
        <position position="316"/>
    </location>
</feature>
<feature type="binding site" evidence="1">
    <location>
        <position position="199"/>
    </location>
    <ligand>
        <name>S-adenosyl-L-methionine</name>
        <dbReference type="ChEBI" id="CHEBI:59789"/>
    </ligand>
</feature>
<feature type="binding site" evidence="1">
    <location>
        <begin position="232"/>
        <end position="235"/>
    </location>
    <ligand>
        <name>S-adenosyl-L-methionine</name>
        <dbReference type="ChEBI" id="CHEBI:59789"/>
    </ligand>
</feature>
<feature type="binding site" evidence="1">
    <location>
        <position position="251"/>
    </location>
    <ligand>
        <name>S-adenosyl-L-methionine</name>
        <dbReference type="ChEBI" id="CHEBI:59789"/>
    </ligand>
</feature>
<feature type="binding site" evidence="1">
    <location>
        <position position="271"/>
    </location>
    <ligand>
        <name>S-adenosyl-L-methionine</name>
        <dbReference type="ChEBI" id="CHEBI:59789"/>
    </ligand>
</feature>
<feature type="binding site" evidence="1">
    <location>
        <position position="287"/>
    </location>
    <ligand>
        <name>S-adenosyl-L-methionine</name>
        <dbReference type="ChEBI" id="CHEBI:59789"/>
    </ligand>
</feature>
<keyword id="KW-0963">Cytoplasm</keyword>
<keyword id="KW-0489">Methyltransferase</keyword>
<keyword id="KW-1185">Reference proteome</keyword>
<keyword id="KW-0698">rRNA processing</keyword>
<keyword id="KW-0949">S-adenosyl-L-methionine</keyword>
<keyword id="KW-0808">Transferase</keyword>
<dbReference type="EC" id="2.1.1.186" evidence="1"/>
<dbReference type="EMBL" id="CR555306">
    <property type="protein sequence ID" value="CAI08680.1"/>
    <property type="molecule type" value="Genomic_DNA"/>
</dbReference>
<dbReference type="RefSeq" id="WP_011238364.1">
    <property type="nucleotide sequence ID" value="NC_006513.1"/>
</dbReference>
<dbReference type="SMR" id="Q5P1Y4"/>
<dbReference type="STRING" id="76114.ebA4504"/>
<dbReference type="KEGG" id="eba:ebA4504"/>
<dbReference type="eggNOG" id="COG2933">
    <property type="taxonomic scope" value="Bacteria"/>
</dbReference>
<dbReference type="HOGENOM" id="CLU_043780_0_0_4"/>
<dbReference type="OrthoDB" id="154490at2"/>
<dbReference type="Proteomes" id="UP000006552">
    <property type="component" value="Chromosome"/>
</dbReference>
<dbReference type="GO" id="GO:0005737">
    <property type="term" value="C:cytoplasm"/>
    <property type="evidence" value="ECO:0007669"/>
    <property type="project" value="UniProtKB-SubCell"/>
</dbReference>
<dbReference type="GO" id="GO:0008757">
    <property type="term" value="F:S-adenosylmethionine-dependent methyltransferase activity"/>
    <property type="evidence" value="ECO:0007669"/>
    <property type="project" value="UniProtKB-UniRule"/>
</dbReference>
<dbReference type="GO" id="GO:0032259">
    <property type="term" value="P:methylation"/>
    <property type="evidence" value="ECO:0007669"/>
    <property type="project" value="UniProtKB-KW"/>
</dbReference>
<dbReference type="GO" id="GO:0006364">
    <property type="term" value="P:rRNA processing"/>
    <property type="evidence" value="ECO:0007669"/>
    <property type="project" value="UniProtKB-UniRule"/>
</dbReference>
<dbReference type="Gene3D" id="3.30.2300.20">
    <property type="match status" value="1"/>
</dbReference>
<dbReference type="Gene3D" id="3.30.70.2810">
    <property type="match status" value="1"/>
</dbReference>
<dbReference type="Gene3D" id="3.40.50.150">
    <property type="entry name" value="Vaccinia Virus protein VP39"/>
    <property type="match status" value="1"/>
</dbReference>
<dbReference type="HAMAP" id="MF_01551">
    <property type="entry name" value="23SrRNA_methyltr_M"/>
    <property type="match status" value="1"/>
</dbReference>
<dbReference type="InterPro" id="IPR040739">
    <property type="entry name" value="RlmM_FDX"/>
</dbReference>
<dbReference type="InterPro" id="IPR048646">
    <property type="entry name" value="RlmM_THUMP-like"/>
</dbReference>
<dbReference type="InterPro" id="IPR002877">
    <property type="entry name" value="RNA_MeTrfase_FtsJ_dom"/>
</dbReference>
<dbReference type="InterPro" id="IPR011224">
    <property type="entry name" value="rRNA_MeTrfase_M"/>
</dbReference>
<dbReference type="InterPro" id="IPR029063">
    <property type="entry name" value="SAM-dependent_MTases_sf"/>
</dbReference>
<dbReference type="NCBIfam" id="NF008734">
    <property type="entry name" value="PRK11760.1"/>
    <property type="match status" value="1"/>
</dbReference>
<dbReference type="PANTHER" id="PTHR37524">
    <property type="entry name" value="RIBOSOMAL RNA LARGE SUBUNIT METHYLTRANSFERASE M"/>
    <property type="match status" value="1"/>
</dbReference>
<dbReference type="PANTHER" id="PTHR37524:SF2">
    <property type="entry name" value="RIBOSOMAL RNA METHYLTRANSFERASE FTSJ DOMAIN-CONTAINING PROTEIN"/>
    <property type="match status" value="1"/>
</dbReference>
<dbReference type="Pfam" id="PF01728">
    <property type="entry name" value="FtsJ"/>
    <property type="match status" value="1"/>
</dbReference>
<dbReference type="Pfam" id="PF18125">
    <property type="entry name" value="RlmM_FDX"/>
    <property type="match status" value="1"/>
</dbReference>
<dbReference type="Pfam" id="PF21239">
    <property type="entry name" value="RLMM_N"/>
    <property type="match status" value="1"/>
</dbReference>
<dbReference type="PIRSF" id="PIRSF028774">
    <property type="entry name" value="UCP028774"/>
    <property type="match status" value="1"/>
</dbReference>
<dbReference type="SUPFAM" id="SSF53335">
    <property type="entry name" value="S-adenosyl-L-methionine-dependent methyltransferases"/>
    <property type="match status" value="1"/>
</dbReference>
<evidence type="ECO:0000255" key="1">
    <source>
        <dbReference type="HAMAP-Rule" id="MF_01551"/>
    </source>
</evidence>
<name>RLMM_AROAE</name>
<gene>
    <name evidence="1" type="primary">rlmM</name>
    <name type="ordered locus">AZOSEA25550</name>
    <name type="ORF">ebA4504</name>
</gene>
<comment type="function">
    <text evidence="1">Catalyzes the 2'-O-methylation at nucleotide C2498 in 23S rRNA.</text>
</comment>
<comment type="catalytic activity">
    <reaction evidence="1">
        <text>cytidine(2498) in 23S rRNA + S-adenosyl-L-methionine = 2'-O-methylcytidine(2498) in 23S rRNA + S-adenosyl-L-homocysteine + H(+)</text>
        <dbReference type="Rhea" id="RHEA:42788"/>
        <dbReference type="Rhea" id="RHEA-COMP:10244"/>
        <dbReference type="Rhea" id="RHEA-COMP:10245"/>
        <dbReference type="ChEBI" id="CHEBI:15378"/>
        <dbReference type="ChEBI" id="CHEBI:57856"/>
        <dbReference type="ChEBI" id="CHEBI:59789"/>
        <dbReference type="ChEBI" id="CHEBI:74495"/>
        <dbReference type="ChEBI" id="CHEBI:82748"/>
        <dbReference type="EC" id="2.1.1.186"/>
    </reaction>
</comment>
<comment type="subunit">
    <text evidence="1">Monomer.</text>
</comment>
<comment type="subcellular location">
    <subcellularLocation>
        <location evidence="1">Cytoplasm</location>
    </subcellularLocation>
</comment>
<comment type="similarity">
    <text evidence="1">Belongs to the class I-like SAM-binding methyltransferase superfamily. RNA methyltransferase RlmE family. RlmM subfamily.</text>
</comment>